<evidence type="ECO:0000255" key="1">
    <source>
        <dbReference type="HAMAP-Rule" id="MF_01024"/>
    </source>
</evidence>
<keyword id="KW-0028">Amino-acid biosynthesis</keyword>
<keyword id="KW-0368">Histidine biosynthesis</keyword>
<keyword id="KW-0479">Metal-binding</keyword>
<keyword id="KW-0520">NAD</keyword>
<keyword id="KW-0560">Oxidoreductase</keyword>
<keyword id="KW-1185">Reference proteome</keyword>
<keyword id="KW-0862">Zinc</keyword>
<proteinExistence type="inferred from homology"/>
<sequence length="445" mass="47303">MAIKIRKLDSAGEGFAAELRAVLAFEASEDDAIERAVAQILADVKARGDAAVLDYTNRFDRLNAASVAALELPQSELEAALEGLEPKRRAALEAAAARVRGYHEKQKIECGSHSWQYTEADGTVLGQKVTPLDRVGLYVPGGKAAYPSSVLMNAIPARVAGVGEIVMVVPTPDGLKNDLVLAAALLGGVDRVFTIGGAQAVAALAYGTQTVPAVDKICGPGNAYVASAKRRVFGTVGIDMIAGPSEILVLCDGTTDPSWVAMDLFSQAEHDELAQSILLCPDEAFIERVEKAIGELLPTMPRQDVIRASLEGRGALVKVRDMAEACRIANDIAPEHLEISALEPHQWGKQIRHAGAIFLGRYTSESLGDYCAGPNHVLPTSRTARFSSPLGVYDFFKRSSLIEVSAEGAHTLGEIASELAYGEGLQAHAKSAEYRMKGAGDRQKG</sequence>
<organism>
    <name type="scientific">Burkholderia mallei (strain ATCC 23344)</name>
    <dbReference type="NCBI Taxonomy" id="243160"/>
    <lineage>
        <taxon>Bacteria</taxon>
        <taxon>Pseudomonadati</taxon>
        <taxon>Pseudomonadota</taxon>
        <taxon>Betaproteobacteria</taxon>
        <taxon>Burkholderiales</taxon>
        <taxon>Burkholderiaceae</taxon>
        <taxon>Burkholderia</taxon>
        <taxon>pseudomallei group</taxon>
    </lineage>
</organism>
<dbReference type="EC" id="1.1.1.23" evidence="1"/>
<dbReference type="EMBL" id="CP000010">
    <property type="protein sequence ID" value="AAU48282.1"/>
    <property type="molecule type" value="Genomic_DNA"/>
</dbReference>
<dbReference type="RefSeq" id="WP_004185201.1">
    <property type="nucleotide sequence ID" value="NC_006348.1"/>
</dbReference>
<dbReference type="RefSeq" id="YP_104235.1">
    <property type="nucleotide sequence ID" value="NC_006348.1"/>
</dbReference>
<dbReference type="SMR" id="Q62GD9"/>
<dbReference type="GeneID" id="93061756"/>
<dbReference type="KEGG" id="bma:BMA2714"/>
<dbReference type="PATRIC" id="fig|243160.12.peg.2784"/>
<dbReference type="eggNOG" id="COG0141">
    <property type="taxonomic scope" value="Bacteria"/>
</dbReference>
<dbReference type="HOGENOM" id="CLU_006732_3_3_4"/>
<dbReference type="UniPathway" id="UPA00031">
    <property type="reaction ID" value="UER00014"/>
</dbReference>
<dbReference type="Proteomes" id="UP000006693">
    <property type="component" value="Chromosome 1"/>
</dbReference>
<dbReference type="GO" id="GO:0005829">
    <property type="term" value="C:cytosol"/>
    <property type="evidence" value="ECO:0007669"/>
    <property type="project" value="TreeGrafter"/>
</dbReference>
<dbReference type="GO" id="GO:0004399">
    <property type="term" value="F:histidinol dehydrogenase activity"/>
    <property type="evidence" value="ECO:0007669"/>
    <property type="project" value="UniProtKB-UniRule"/>
</dbReference>
<dbReference type="GO" id="GO:0051287">
    <property type="term" value="F:NAD binding"/>
    <property type="evidence" value="ECO:0007669"/>
    <property type="project" value="InterPro"/>
</dbReference>
<dbReference type="GO" id="GO:0008270">
    <property type="term" value="F:zinc ion binding"/>
    <property type="evidence" value="ECO:0007669"/>
    <property type="project" value="UniProtKB-UniRule"/>
</dbReference>
<dbReference type="GO" id="GO:0000105">
    <property type="term" value="P:L-histidine biosynthetic process"/>
    <property type="evidence" value="ECO:0007669"/>
    <property type="project" value="UniProtKB-UniRule"/>
</dbReference>
<dbReference type="CDD" id="cd06572">
    <property type="entry name" value="Histidinol_dh"/>
    <property type="match status" value="1"/>
</dbReference>
<dbReference type="FunFam" id="3.40.50.1980:FF:000001">
    <property type="entry name" value="Histidinol dehydrogenase"/>
    <property type="match status" value="1"/>
</dbReference>
<dbReference type="FunFam" id="3.40.50.1980:FF:000026">
    <property type="entry name" value="Histidinol dehydrogenase"/>
    <property type="match status" value="1"/>
</dbReference>
<dbReference type="Gene3D" id="1.20.5.1300">
    <property type="match status" value="1"/>
</dbReference>
<dbReference type="Gene3D" id="3.40.50.1980">
    <property type="entry name" value="Nitrogenase molybdenum iron protein domain"/>
    <property type="match status" value="2"/>
</dbReference>
<dbReference type="HAMAP" id="MF_01024">
    <property type="entry name" value="HisD"/>
    <property type="match status" value="1"/>
</dbReference>
<dbReference type="InterPro" id="IPR016161">
    <property type="entry name" value="Ald_DH/histidinol_DH"/>
</dbReference>
<dbReference type="InterPro" id="IPR001692">
    <property type="entry name" value="Histidinol_DH_CS"/>
</dbReference>
<dbReference type="InterPro" id="IPR022695">
    <property type="entry name" value="Histidinol_DH_monofunct"/>
</dbReference>
<dbReference type="InterPro" id="IPR012131">
    <property type="entry name" value="Hstdl_DH"/>
</dbReference>
<dbReference type="NCBIfam" id="TIGR00069">
    <property type="entry name" value="hisD"/>
    <property type="match status" value="1"/>
</dbReference>
<dbReference type="PANTHER" id="PTHR21256:SF2">
    <property type="entry name" value="HISTIDINE BIOSYNTHESIS TRIFUNCTIONAL PROTEIN"/>
    <property type="match status" value="1"/>
</dbReference>
<dbReference type="PANTHER" id="PTHR21256">
    <property type="entry name" value="HISTIDINOL DEHYDROGENASE HDH"/>
    <property type="match status" value="1"/>
</dbReference>
<dbReference type="Pfam" id="PF00815">
    <property type="entry name" value="Histidinol_dh"/>
    <property type="match status" value="1"/>
</dbReference>
<dbReference type="PIRSF" id="PIRSF000099">
    <property type="entry name" value="Histidinol_dh"/>
    <property type="match status" value="1"/>
</dbReference>
<dbReference type="PRINTS" id="PR00083">
    <property type="entry name" value="HOLDHDRGNASE"/>
</dbReference>
<dbReference type="SUPFAM" id="SSF53720">
    <property type="entry name" value="ALDH-like"/>
    <property type="match status" value="1"/>
</dbReference>
<dbReference type="PROSITE" id="PS00611">
    <property type="entry name" value="HISOL_DEHYDROGENASE"/>
    <property type="match status" value="1"/>
</dbReference>
<gene>
    <name evidence="1" type="primary">hisD</name>
    <name type="ordered locus">BMA2714</name>
</gene>
<feature type="chain" id="PRO_0000135748" description="Histidinol dehydrogenase">
    <location>
        <begin position="1"/>
        <end position="445"/>
    </location>
</feature>
<feature type="active site" description="Proton acceptor" evidence="1">
    <location>
        <position position="335"/>
    </location>
</feature>
<feature type="active site" description="Proton acceptor" evidence="1">
    <location>
        <position position="336"/>
    </location>
</feature>
<feature type="binding site" evidence="1">
    <location>
        <position position="138"/>
    </location>
    <ligand>
        <name>NAD(+)</name>
        <dbReference type="ChEBI" id="CHEBI:57540"/>
    </ligand>
</feature>
<feature type="binding site" evidence="1">
    <location>
        <position position="199"/>
    </location>
    <ligand>
        <name>NAD(+)</name>
        <dbReference type="ChEBI" id="CHEBI:57540"/>
    </ligand>
</feature>
<feature type="binding site" evidence="1">
    <location>
        <position position="222"/>
    </location>
    <ligand>
        <name>NAD(+)</name>
        <dbReference type="ChEBI" id="CHEBI:57540"/>
    </ligand>
</feature>
<feature type="binding site" evidence="1">
    <location>
        <position position="245"/>
    </location>
    <ligand>
        <name>substrate</name>
    </ligand>
</feature>
<feature type="binding site" evidence="1">
    <location>
        <position position="267"/>
    </location>
    <ligand>
        <name>substrate</name>
    </ligand>
</feature>
<feature type="binding site" evidence="1">
    <location>
        <position position="267"/>
    </location>
    <ligand>
        <name>Zn(2+)</name>
        <dbReference type="ChEBI" id="CHEBI:29105"/>
    </ligand>
</feature>
<feature type="binding site" evidence="1">
    <location>
        <position position="270"/>
    </location>
    <ligand>
        <name>substrate</name>
    </ligand>
</feature>
<feature type="binding site" evidence="1">
    <location>
        <position position="270"/>
    </location>
    <ligand>
        <name>Zn(2+)</name>
        <dbReference type="ChEBI" id="CHEBI:29105"/>
    </ligand>
</feature>
<feature type="binding site" evidence="1">
    <location>
        <position position="336"/>
    </location>
    <ligand>
        <name>substrate</name>
    </ligand>
</feature>
<feature type="binding site" evidence="1">
    <location>
        <position position="369"/>
    </location>
    <ligand>
        <name>substrate</name>
    </ligand>
</feature>
<feature type="binding site" evidence="1">
    <location>
        <position position="369"/>
    </location>
    <ligand>
        <name>Zn(2+)</name>
        <dbReference type="ChEBI" id="CHEBI:29105"/>
    </ligand>
</feature>
<feature type="binding site" evidence="1">
    <location>
        <position position="423"/>
    </location>
    <ligand>
        <name>substrate</name>
    </ligand>
</feature>
<feature type="binding site" evidence="1">
    <location>
        <position position="428"/>
    </location>
    <ligand>
        <name>substrate</name>
    </ligand>
</feature>
<feature type="binding site" evidence="1">
    <location>
        <position position="428"/>
    </location>
    <ligand>
        <name>Zn(2+)</name>
        <dbReference type="ChEBI" id="CHEBI:29105"/>
    </ligand>
</feature>
<accession>Q62GD9</accession>
<reference key="1">
    <citation type="journal article" date="2004" name="Proc. Natl. Acad. Sci. U.S.A.">
        <title>Structural flexibility in the Burkholderia mallei genome.</title>
        <authorList>
            <person name="Nierman W.C."/>
            <person name="DeShazer D."/>
            <person name="Kim H.S."/>
            <person name="Tettelin H."/>
            <person name="Nelson K.E."/>
            <person name="Feldblyum T.V."/>
            <person name="Ulrich R.L."/>
            <person name="Ronning C.M."/>
            <person name="Brinkac L.M."/>
            <person name="Daugherty S.C."/>
            <person name="Davidsen T.D."/>
            <person name="DeBoy R.T."/>
            <person name="Dimitrov G."/>
            <person name="Dodson R.J."/>
            <person name="Durkin A.S."/>
            <person name="Gwinn M.L."/>
            <person name="Haft D.H."/>
            <person name="Khouri H.M."/>
            <person name="Kolonay J.F."/>
            <person name="Madupu R."/>
            <person name="Mohammoud Y."/>
            <person name="Nelson W.C."/>
            <person name="Radune D."/>
            <person name="Romero C.M."/>
            <person name="Sarria S."/>
            <person name="Selengut J."/>
            <person name="Shamblin C."/>
            <person name="Sullivan S.A."/>
            <person name="White O."/>
            <person name="Yu Y."/>
            <person name="Zafar N."/>
            <person name="Zhou L."/>
            <person name="Fraser C.M."/>
        </authorList>
    </citation>
    <scope>NUCLEOTIDE SEQUENCE [LARGE SCALE GENOMIC DNA]</scope>
    <source>
        <strain>ATCC 23344</strain>
    </source>
</reference>
<comment type="function">
    <text evidence="1">Catalyzes the sequential NAD-dependent oxidations of L-histidinol to L-histidinaldehyde and then to L-histidine.</text>
</comment>
<comment type="catalytic activity">
    <reaction evidence="1">
        <text>L-histidinol + 2 NAD(+) + H2O = L-histidine + 2 NADH + 3 H(+)</text>
        <dbReference type="Rhea" id="RHEA:20641"/>
        <dbReference type="ChEBI" id="CHEBI:15377"/>
        <dbReference type="ChEBI" id="CHEBI:15378"/>
        <dbReference type="ChEBI" id="CHEBI:57540"/>
        <dbReference type="ChEBI" id="CHEBI:57595"/>
        <dbReference type="ChEBI" id="CHEBI:57699"/>
        <dbReference type="ChEBI" id="CHEBI:57945"/>
        <dbReference type="EC" id="1.1.1.23"/>
    </reaction>
</comment>
<comment type="cofactor">
    <cofactor evidence="1">
        <name>Zn(2+)</name>
        <dbReference type="ChEBI" id="CHEBI:29105"/>
    </cofactor>
    <text evidence="1">Binds 1 zinc ion per subunit.</text>
</comment>
<comment type="pathway">
    <text evidence="1">Amino-acid biosynthesis; L-histidine biosynthesis; L-histidine from 5-phospho-alpha-D-ribose 1-diphosphate: step 9/9.</text>
</comment>
<comment type="similarity">
    <text evidence="1">Belongs to the histidinol dehydrogenase family.</text>
</comment>
<name>HISX_BURMA</name>
<protein>
    <recommendedName>
        <fullName evidence="1">Histidinol dehydrogenase</fullName>
        <shortName evidence="1">HDH</shortName>
        <ecNumber evidence="1">1.1.1.23</ecNumber>
    </recommendedName>
</protein>